<organism>
    <name type="scientific">Escherichia coli (strain K12)</name>
    <dbReference type="NCBI Taxonomy" id="83333"/>
    <lineage>
        <taxon>Bacteria</taxon>
        <taxon>Pseudomonadati</taxon>
        <taxon>Pseudomonadota</taxon>
        <taxon>Gammaproteobacteria</taxon>
        <taxon>Enterobacterales</taxon>
        <taxon>Enterobacteriaceae</taxon>
        <taxon>Escherichia</taxon>
    </lineage>
</organism>
<proteinExistence type="inferred from homology"/>
<protein>
    <recommendedName>
        <fullName>Uncharacterized protein YahF</fullName>
    </recommendedName>
</protein>
<keyword id="KW-1185">Reference proteome</keyword>
<dbReference type="EMBL" id="U73857">
    <property type="protein sequence ID" value="AAB18046.1"/>
    <property type="molecule type" value="Genomic_DNA"/>
</dbReference>
<dbReference type="EMBL" id="U00096">
    <property type="protein sequence ID" value="AAC73423.1"/>
    <property type="molecule type" value="Genomic_DNA"/>
</dbReference>
<dbReference type="EMBL" id="AP009048">
    <property type="protein sequence ID" value="BAE76103.1"/>
    <property type="molecule type" value="Genomic_DNA"/>
</dbReference>
<dbReference type="PIR" id="H64758">
    <property type="entry name" value="H64758"/>
</dbReference>
<dbReference type="RefSeq" id="NP_414854.1">
    <property type="nucleotide sequence ID" value="NC_000913.3"/>
</dbReference>
<dbReference type="SMR" id="P77187"/>
<dbReference type="BioGRID" id="4262163">
    <property type="interactions" value="144"/>
</dbReference>
<dbReference type="BioGRID" id="851626">
    <property type="interactions" value="1"/>
</dbReference>
<dbReference type="DIP" id="DIP-11258N"/>
<dbReference type="FunCoup" id="P77187">
    <property type="interactions" value="92"/>
</dbReference>
<dbReference type="IntAct" id="P77187">
    <property type="interactions" value="5"/>
</dbReference>
<dbReference type="STRING" id="511145.b0320"/>
<dbReference type="PaxDb" id="511145-b0320"/>
<dbReference type="DNASU" id="947298"/>
<dbReference type="EnsemblBacteria" id="AAC73423">
    <property type="protein sequence ID" value="AAC73423"/>
    <property type="gene ID" value="b0320"/>
</dbReference>
<dbReference type="GeneID" id="947298"/>
<dbReference type="KEGG" id="ecj:JW0312"/>
<dbReference type="KEGG" id="eco:b0320"/>
<dbReference type="KEGG" id="ecoc:C3026_01570"/>
<dbReference type="KEGG" id="ecoc:C3026_24740"/>
<dbReference type="PATRIC" id="fig|1411691.4.peg.1957"/>
<dbReference type="EchoBASE" id="EB3360"/>
<dbReference type="eggNOG" id="COG0074">
    <property type="taxonomic scope" value="Bacteria"/>
</dbReference>
<dbReference type="HOGENOM" id="CLU_026233_1_0_6"/>
<dbReference type="InParanoid" id="P77187"/>
<dbReference type="OMA" id="LCDEAMF"/>
<dbReference type="OrthoDB" id="5580580at2"/>
<dbReference type="PhylomeDB" id="P77187"/>
<dbReference type="BioCyc" id="EcoCyc:G6185-MONOMER"/>
<dbReference type="PRO" id="PR:P77187"/>
<dbReference type="Proteomes" id="UP000000625">
    <property type="component" value="Chromosome"/>
</dbReference>
<dbReference type="GO" id="GO:0005829">
    <property type="term" value="C:cytosol"/>
    <property type="evidence" value="ECO:0000314"/>
    <property type="project" value="EcoCyc"/>
</dbReference>
<dbReference type="GO" id="GO:0009361">
    <property type="term" value="C:succinate-CoA ligase complex (ADP-forming)"/>
    <property type="evidence" value="ECO:0000318"/>
    <property type="project" value="GO_Central"/>
</dbReference>
<dbReference type="GO" id="GO:0004775">
    <property type="term" value="F:succinate-CoA ligase (ADP-forming) activity"/>
    <property type="evidence" value="ECO:0000318"/>
    <property type="project" value="GO_Central"/>
</dbReference>
<dbReference type="GO" id="GO:0004776">
    <property type="term" value="F:succinate-CoA ligase (GDP-forming) activity"/>
    <property type="evidence" value="ECO:0000318"/>
    <property type="project" value="GO_Central"/>
</dbReference>
<dbReference type="GO" id="GO:0006099">
    <property type="term" value="P:tricarboxylic acid cycle"/>
    <property type="evidence" value="ECO:0000318"/>
    <property type="project" value="GO_Central"/>
</dbReference>
<dbReference type="FunFam" id="3.40.50.261:FF:000012">
    <property type="entry name" value="Acyl-CoA synthetase FdrA"/>
    <property type="match status" value="1"/>
</dbReference>
<dbReference type="FunFam" id="3.40.50.261:FF:000016">
    <property type="entry name" value="Acyl-CoA synthetase FdrA"/>
    <property type="match status" value="1"/>
</dbReference>
<dbReference type="FunFam" id="3.40.50.720:FF:000361">
    <property type="entry name" value="Acyl-CoA synthetase FdrA"/>
    <property type="match status" value="1"/>
</dbReference>
<dbReference type="Gene3D" id="3.40.50.720">
    <property type="entry name" value="NAD(P)-binding Rossmann-like Domain"/>
    <property type="match status" value="1"/>
</dbReference>
<dbReference type="Gene3D" id="3.40.50.261">
    <property type="entry name" value="Succinyl-CoA synthetase domains"/>
    <property type="match status" value="2"/>
</dbReference>
<dbReference type="InterPro" id="IPR003781">
    <property type="entry name" value="CoA-bd"/>
</dbReference>
<dbReference type="InterPro" id="IPR005811">
    <property type="entry name" value="SUCC_ACL_C"/>
</dbReference>
<dbReference type="InterPro" id="IPR016102">
    <property type="entry name" value="Succinyl-CoA_synth-like"/>
</dbReference>
<dbReference type="NCBIfam" id="NF004760">
    <property type="entry name" value="PRK06091.1"/>
    <property type="match status" value="1"/>
</dbReference>
<dbReference type="PANTHER" id="PTHR11117:SF24">
    <property type="entry name" value="PROTEIN FDRA"/>
    <property type="match status" value="1"/>
</dbReference>
<dbReference type="PANTHER" id="PTHR11117">
    <property type="entry name" value="SUCCINYL-COA LIGASE SUBUNIT ALPHA"/>
    <property type="match status" value="1"/>
</dbReference>
<dbReference type="Pfam" id="PF02629">
    <property type="entry name" value="CoA_binding"/>
    <property type="match status" value="1"/>
</dbReference>
<dbReference type="Pfam" id="PF00549">
    <property type="entry name" value="Ligase_CoA"/>
    <property type="match status" value="1"/>
</dbReference>
<dbReference type="SUPFAM" id="SSF52210">
    <property type="entry name" value="Succinyl-CoA synthetase domains"/>
    <property type="match status" value="2"/>
</dbReference>
<comment type="similarity">
    <text evidence="1">Belongs to the AllF family.</text>
</comment>
<name>YAHF_ECOLI</name>
<gene>
    <name type="primary">yahF</name>
    <name type="ordered locus">b0320</name>
    <name type="ordered locus">JW0312</name>
</gene>
<reference key="1">
    <citation type="submission" date="1997-01" db="EMBL/GenBank/DDBJ databases">
        <title>Sequence of minutes 4-25 of Escherichia coli.</title>
        <authorList>
            <person name="Chung E."/>
            <person name="Allen E."/>
            <person name="Araujo R."/>
            <person name="Aparicio A.M."/>
            <person name="Davis K."/>
            <person name="Duncan M."/>
            <person name="Federspiel N."/>
            <person name="Hyman R."/>
            <person name="Kalman S."/>
            <person name="Komp C."/>
            <person name="Kurdi O."/>
            <person name="Lew H."/>
            <person name="Lin D."/>
            <person name="Namath A."/>
            <person name="Oefner P."/>
            <person name="Roberts D."/>
            <person name="Schramm S."/>
            <person name="Davis R.W."/>
        </authorList>
    </citation>
    <scope>NUCLEOTIDE SEQUENCE [LARGE SCALE GENOMIC DNA]</scope>
    <source>
        <strain>K12 / MG1655 / ATCC 47076</strain>
    </source>
</reference>
<reference key="2">
    <citation type="journal article" date="1997" name="Science">
        <title>The complete genome sequence of Escherichia coli K-12.</title>
        <authorList>
            <person name="Blattner F.R."/>
            <person name="Plunkett G. III"/>
            <person name="Bloch C.A."/>
            <person name="Perna N.T."/>
            <person name="Burland V."/>
            <person name="Riley M."/>
            <person name="Collado-Vides J."/>
            <person name="Glasner J.D."/>
            <person name="Rode C.K."/>
            <person name="Mayhew G.F."/>
            <person name="Gregor J."/>
            <person name="Davis N.W."/>
            <person name="Kirkpatrick H.A."/>
            <person name="Goeden M.A."/>
            <person name="Rose D.J."/>
            <person name="Mau B."/>
            <person name="Shao Y."/>
        </authorList>
    </citation>
    <scope>NUCLEOTIDE SEQUENCE [LARGE SCALE GENOMIC DNA]</scope>
    <source>
        <strain>K12 / MG1655 / ATCC 47076</strain>
    </source>
</reference>
<reference key="3">
    <citation type="journal article" date="2006" name="Mol. Syst. Biol.">
        <title>Highly accurate genome sequences of Escherichia coli K-12 strains MG1655 and W3110.</title>
        <authorList>
            <person name="Hayashi K."/>
            <person name="Morooka N."/>
            <person name="Yamamoto Y."/>
            <person name="Fujita K."/>
            <person name="Isono K."/>
            <person name="Choi S."/>
            <person name="Ohtsubo E."/>
            <person name="Baba T."/>
            <person name="Wanner B.L."/>
            <person name="Mori H."/>
            <person name="Horiuchi T."/>
        </authorList>
    </citation>
    <scope>NUCLEOTIDE SEQUENCE [LARGE SCALE GENOMIC DNA]</scope>
    <source>
        <strain>K12 / W3110 / ATCC 27325 / DSM 5911</strain>
    </source>
</reference>
<feature type="chain" id="PRO_0000168576" description="Uncharacterized protein YahF">
    <location>
        <begin position="1"/>
        <end position="515"/>
    </location>
</feature>
<sequence length="515" mass="55581">MSVKIVIKPNTYFDSVSLMSISTRANKLDGVEQAFVAMATEMNKGVLKNLGLLTPELEQAKNGDLMIVINGKSGADNEQLLVEIEELFNTKAQSGSHEARYATIGSAKKHIPESNLAVISVNGLFAAREARQALQNDLNVMLFSDNVSVEDELALKQLAHEKGLLMMGPDCGTAIINGAALCFGNAVRRGNIGIVGASGTGSQELSVRIHEFGGGVSQLIGTGGRDLSEKIGGLMMLDAIGMLENDPQTEIIALISKPPAPAVARKVLERARACRKPVVVCFLDRGETPVDEQGLQFARGTKEAALKAVMLSGVKQENLDLHTLNQPLIADVRARLQPQQKYIRGLFCGGTLCDETMFAVMEKHGDVYSNIQPDPEFRLKDINRSIKHTFLDFGDDDFTNGKPHPMIDPTNRISRLIEEARDPEVAVIVMDFVLGFGSHEDPVGSTIETIKEAKAIAAAEGRELIILAYVLGTDLDTPSLEQQSQMLLDAGVILASSSTNTGLLAREFICKGEEA</sequence>
<accession>P77187</accession>
<accession>Q2MCA3</accession>
<evidence type="ECO:0000305" key="1"/>